<accession>B2I061</accession>
<evidence type="ECO:0000255" key="1">
    <source>
        <dbReference type="HAMAP-Rule" id="MF_01559"/>
    </source>
</evidence>
<organism>
    <name type="scientific">Acinetobacter baumannii (strain ACICU)</name>
    <dbReference type="NCBI Taxonomy" id="405416"/>
    <lineage>
        <taxon>Bacteria</taxon>
        <taxon>Pseudomonadati</taxon>
        <taxon>Pseudomonadota</taxon>
        <taxon>Gammaproteobacteria</taxon>
        <taxon>Moraxellales</taxon>
        <taxon>Moraxellaceae</taxon>
        <taxon>Acinetobacter</taxon>
        <taxon>Acinetobacter calcoaceticus/baumannii complex</taxon>
    </lineage>
</organism>
<feature type="chain" id="PRO_0000383406" description="L-lactate dehydrogenase">
    <location>
        <begin position="1"/>
        <end position="383"/>
    </location>
</feature>
<feature type="domain" description="FMN hydroxy acid dehydrogenase" evidence="1">
    <location>
        <begin position="1"/>
        <end position="380"/>
    </location>
</feature>
<feature type="active site" description="Proton acceptor" evidence="1">
    <location>
        <position position="275"/>
    </location>
</feature>
<feature type="binding site" evidence="1">
    <location>
        <position position="24"/>
    </location>
    <ligand>
        <name>substrate</name>
    </ligand>
</feature>
<feature type="binding site" evidence="1">
    <location>
        <position position="106"/>
    </location>
    <ligand>
        <name>FMN</name>
        <dbReference type="ChEBI" id="CHEBI:58210"/>
    </ligand>
</feature>
<feature type="binding site" evidence="1">
    <location>
        <position position="127"/>
    </location>
    <ligand>
        <name>FMN</name>
        <dbReference type="ChEBI" id="CHEBI:58210"/>
    </ligand>
</feature>
<feature type="binding site" evidence="1">
    <location>
        <position position="129"/>
    </location>
    <ligand>
        <name>substrate</name>
    </ligand>
</feature>
<feature type="binding site" evidence="1">
    <location>
        <position position="155"/>
    </location>
    <ligand>
        <name>FMN</name>
        <dbReference type="ChEBI" id="CHEBI:58210"/>
    </ligand>
</feature>
<feature type="binding site" evidence="1">
    <location>
        <position position="164"/>
    </location>
    <ligand>
        <name>substrate</name>
    </ligand>
</feature>
<feature type="binding site" evidence="1">
    <location>
        <position position="251"/>
    </location>
    <ligand>
        <name>FMN</name>
        <dbReference type="ChEBI" id="CHEBI:58210"/>
    </ligand>
</feature>
<feature type="binding site" evidence="1">
    <location>
        <position position="278"/>
    </location>
    <ligand>
        <name>substrate</name>
    </ligand>
</feature>
<feature type="binding site" evidence="1">
    <location>
        <begin position="306"/>
        <end position="330"/>
    </location>
    <ligand>
        <name>FMN</name>
        <dbReference type="ChEBI" id="CHEBI:58210"/>
    </ligand>
</feature>
<proteinExistence type="inferred from homology"/>
<keyword id="KW-0997">Cell inner membrane</keyword>
<keyword id="KW-1003">Cell membrane</keyword>
<keyword id="KW-0285">Flavoprotein</keyword>
<keyword id="KW-0288">FMN</keyword>
<keyword id="KW-0472">Membrane</keyword>
<keyword id="KW-0560">Oxidoreductase</keyword>
<gene>
    <name evidence="1" type="primary">lldD</name>
    <name type="ordered locus">ACICU_00095</name>
</gene>
<sequence>MIISSGNDYRAAAQRRLPPFLFHYIDGGAYAEYTLKRNVQDLSEIALRQRVLNDMSALSLETKLFNETLSMPVALAPVGLTGMYARRGEVQAAMAADKKGIPFTLSTVSVCPIEEVAPAINRPMWFQLYVLRDRGFMRNALERAKAAGCSTLVFTVDMPVPGARYRDAHSGMSGPNAAMRRYMQSVFHPHWSWNVGLMGRPHDLGNISKYLGKPTGLEDYIGWLGSNFDPSISWKDLEWIREFWDGPMVIKGILDPEDAKDAVRFGADGIVVSNHGGRQLDGVMSSARALPAIADAVKGDLAILADSGIRNGLDVVRMLALGADTVLLGRAFVYALAAAGGQGVSNLLDLIDKEMRVAMTLTGAKSISDINADCLVQAIKQGL</sequence>
<comment type="function">
    <text evidence="1">Catalyzes the conversion of L-lactate to pyruvate. Is coupled to the respiratory chain.</text>
</comment>
<comment type="catalytic activity">
    <reaction evidence="1">
        <text>(S)-lactate + A = pyruvate + AH2</text>
        <dbReference type="Rhea" id="RHEA:45816"/>
        <dbReference type="ChEBI" id="CHEBI:13193"/>
        <dbReference type="ChEBI" id="CHEBI:15361"/>
        <dbReference type="ChEBI" id="CHEBI:16651"/>
        <dbReference type="ChEBI" id="CHEBI:17499"/>
    </reaction>
</comment>
<comment type="cofactor">
    <cofactor evidence="1">
        <name>FMN</name>
        <dbReference type="ChEBI" id="CHEBI:58210"/>
    </cofactor>
</comment>
<comment type="subcellular location">
    <subcellularLocation>
        <location evidence="1">Cell inner membrane</location>
        <topology evidence="1">Peripheral membrane protein</topology>
    </subcellularLocation>
</comment>
<comment type="similarity">
    <text evidence="1">Belongs to the FMN-dependent alpha-hydroxy acid dehydrogenase family.</text>
</comment>
<protein>
    <recommendedName>
        <fullName evidence="1">L-lactate dehydrogenase</fullName>
        <ecNumber evidence="1">1.1.-.-</ecNumber>
    </recommendedName>
</protein>
<dbReference type="EC" id="1.1.-.-" evidence="1"/>
<dbReference type="EMBL" id="CP000863">
    <property type="protein sequence ID" value="ACC55407.1"/>
    <property type="molecule type" value="Genomic_DNA"/>
</dbReference>
<dbReference type="RefSeq" id="WP_000587282.1">
    <property type="nucleotide sequence ID" value="NZ_CP031380.1"/>
</dbReference>
<dbReference type="SMR" id="B2I061"/>
<dbReference type="GeneID" id="92892082"/>
<dbReference type="KEGG" id="abc:ACICU_00095"/>
<dbReference type="HOGENOM" id="CLU_020639_0_0_6"/>
<dbReference type="Proteomes" id="UP000008839">
    <property type="component" value="Chromosome"/>
</dbReference>
<dbReference type="GO" id="GO:0005886">
    <property type="term" value="C:plasma membrane"/>
    <property type="evidence" value="ECO:0007669"/>
    <property type="project" value="UniProtKB-SubCell"/>
</dbReference>
<dbReference type="GO" id="GO:0010181">
    <property type="term" value="F:FMN binding"/>
    <property type="evidence" value="ECO:0007669"/>
    <property type="project" value="InterPro"/>
</dbReference>
<dbReference type="GO" id="GO:0004459">
    <property type="term" value="F:L-lactate dehydrogenase activity"/>
    <property type="evidence" value="ECO:0007669"/>
    <property type="project" value="UniProtKB-UniRule"/>
</dbReference>
<dbReference type="GO" id="GO:0009060">
    <property type="term" value="P:aerobic respiration"/>
    <property type="evidence" value="ECO:0007669"/>
    <property type="project" value="TreeGrafter"/>
</dbReference>
<dbReference type="GO" id="GO:0006089">
    <property type="term" value="P:lactate metabolic process"/>
    <property type="evidence" value="ECO:0007669"/>
    <property type="project" value="UniProtKB-UniRule"/>
</dbReference>
<dbReference type="CDD" id="cd02809">
    <property type="entry name" value="alpha_hydroxyacid_oxid_FMN"/>
    <property type="match status" value="1"/>
</dbReference>
<dbReference type="FunFam" id="3.20.20.70:FF:000029">
    <property type="entry name" value="L-lactate dehydrogenase"/>
    <property type="match status" value="1"/>
</dbReference>
<dbReference type="Gene3D" id="3.20.20.70">
    <property type="entry name" value="Aldolase class I"/>
    <property type="match status" value="1"/>
</dbReference>
<dbReference type="HAMAP" id="MF_01559">
    <property type="entry name" value="L_lact_dehydr"/>
    <property type="match status" value="1"/>
</dbReference>
<dbReference type="InterPro" id="IPR013785">
    <property type="entry name" value="Aldolase_TIM"/>
</dbReference>
<dbReference type="InterPro" id="IPR012133">
    <property type="entry name" value="Alpha-hydoxy_acid_DH_FMN"/>
</dbReference>
<dbReference type="InterPro" id="IPR000262">
    <property type="entry name" value="FMN-dep_DH"/>
</dbReference>
<dbReference type="InterPro" id="IPR037396">
    <property type="entry name" value="FMN_HAD"/>
</dbReference>
<dbReference type="InterPro" id="IPR008259">
    <property type="entry name" value="FMN_hydac_DH_AS"/>
</dbReference>
<dbReference type="InterPro" id="IPR020920">
    <property type="entry name" value="LldD"/>
</dbReference>
<dbReference type="NCBIfam" id="NF033901">
    <property type="entry name" value="L_lactate_LldD"/>
    <property type="match status" value="1"/>
</dbReference>
<dbReference type="NCBIfam" id="NF008398">
    <property type="entry name" value="PRK11197.1"/>
    <property type="match status" value="1"/>
</dbReference>
<dbReference type="PANTHER" id="PTHR10578:SF85">
    <property type="entry name" value="L-LACTATE DEHYDROGENASE"/>
    <property type="match status" value="1"/>
</dbReference>
<dbReference type="PANTHER" id="PTHR10578">
    <property type="entry name" value="S -2-HYDROXY-ACID OXIDASE-RELATED"/>
    <property type="match status" value="1"/>
</dbReference>
<dbReference type="Pfam" id="PF01070">
    <property type="entry name" value="FMN_dh"/>
    <property type="match status" value="1"/>
</dbReference>
<dbReference type="PIRSF" id="PIRSF000138">
    <property type="entry name" value="Al-hdrx_acd_dh"/>
    <property type="match status" value="1"/>
</dbReference>
<dbReference type="SUPFAM" id="SSF51395">
    <property type="entry name" value="FMN-linked oxidoreductases"/>
    <property type="match status" value="1"/>
</dbReference>
<dbReference type="PROSITE" id="PS00557">
    <property type="entry name" value="FMN_HYDROXY_ACID_DH_1"/>
    <property type="match status" value="1"/>
</dbReference>
<dbReference type="PROSITE" id="PS51349">
    <property type="entry name" value="FMN_HYDROXY_ACID_DH_2"/>
    <property type="match status" value="1"/>
</dbReference>
<name>LLDD_ACIBC</name>
<reference key="1">
    <citation type="journal article" date="2008" name="Antimicrob. Agents Chemother.">
        <title>Whole-genome pyrosequencing of an epidemic multidrug-resistant Acinetobacter baumannii strain belonging to the European clone II group.</title>
        <authorList>
            <person name="Iacono M."/>
            <person name="Villa L."/>
            <person name="Fortini D."/>
            <person name="Bordoni R."/>
            <person name="Imperi F."/>
            <person name="Bonnal R.J."/>
            <person name="Sicheritz-Ponten T."/>
            <person name="De Bellis G."/>
            <person name="Visca P."/>
            <person name="Cassone A."/>
            <person name="Carattoli A."/>
        </authorList>
    </citation>
    <scope>NUCLEOTIDE SEQUENCE [LARGE SCALE GENOMIC DNA]</scope>
    <source>
        <strain>ACICU</strain>
    </source>
</reference>